<proteinExistence type="inferred from homology"/>
<dbReference type="EC" id="2.1.1.198" evidence="1"/>
<dbReference type="EMBL" id="D26185">
    <property type="protein sequence ID" value="BAA05271.1"/>
    <property type="molecule type" value="Genomic_DNA"/>
</dbReference>
<dbReference type="EMBL" id="AL009126">
    <property type="protein sequence ID" value="CAB11812.1"/>
    <property type="molecule type" value="Genomic_DNA"/>
</dbReference>
<dbReference type="PIR" id="S66065">
    <property type="entry name" value="S66065"/>
</dbReference>
<dbReference type="RefSeq" id="NP_387917.1">
    <property type="nucleotide sequence ID" value="NC_000964.3"/>
</dbReference>
<dbReference type="RefSeq" id="WP_003243457.1">
    <property type="nucleotide sequence ID" value="NZ_OZ025638.1"/>
</dbReference>
<dbReference type="SMR" id="P37544"/>
<dbReference type="FunCoup" id="P37544">
    <property type="interactions" value="603"/>
</dbReference>
<dbReference type="STRING" id="224308.BSU00360"/>
<dbReference type="PaxDb" id="224308-BSU00360"/>
<dbReference type="DNASU" id="937010"/>
<dbReference type="EnsemblBacteria" id="CAB11812">
    <property type="protein sequence ID" value="CAB11812"/>
    <property type="gene ID" value="BSU_00360"/>
</dbReference>
<dbReference type="GeneID" id="937010"/>
<dbReference type="KEGG" id="bsu:BSU00360"/>
<dbReference type="PATRIC" id="fig|224308.179.peg.36"/>
<dbReference type="eggNOG" id="COG0313">
    <property type="taxonomic scope" value="Bacteria"/>
</dbReference>
<dbReference type="InParanoid" id="P37544"/>
<dbReference type="OrthoDB" id="9809084at2"/>
<dbReference type="PhylomeDB" id="P37544"/>
<dbReference type="BioCyc" id="BSUB:BSU00360-MONOMER"/>
<dbReference type="Proteomes" id="UP000001570">
    <property type="component" value="Chromosome"/>
</dbReference>
<dbReference type="GO" id="GO:0005737">
    <property type="term" value="C:cytoplasm"/>
    <property type="evidence" value="ECO:0007669"/>
    <property type="project" value="UniProtKB-SubCell"/>
</dbReference>
<dbReference type="GO" id="GO:0070677">
    <property type="term" value="F:rRNA (cytosine-2'-O-)-methyltransferase activity"/>
    <property type="evidence" value="ECO:0007669"/>
    <property type="project" value="UniProtKB-UniRule"/>
</dbReference>
<dbReference type="CDD" id="cd11648">
    <property type="entry name" value="RsmI"/>
    <property type="match status" value="1"/>
</dbReference>
<dbReference type="FunFam" id="3.30.950.10:FF:000002">
    <property type="entry name" value="Ribosomal RNA small subunit methyltransferase I"/>
    <property type="match status" value="1"/>
</dbReference>
<dbReference type="FunFam" id="3.40.1010.10:FF:000002">
    <property type="entry name" value="Ribosomal RNA small subunit methyltransferase I"/>
    <property type="match status" value="1"/>
</dbReference>
<dbReference type="Gene3D" id="3.40.1010.10">
    <property type="entry name" value="Cobalt-precorrin-4 Transmethylase, Domain 1"/>
    <property type="match status" value="1"/>
</dbReference>
<dbReference type="Gene3D" id="3.30.950.10">
    <property type="entry name" value="Methyltransferase, Cobalt-precorrin-4 Transmethylase, Domain 2"/>
    <property type="match status" value="1"/>
</dbReference>
<dbReference type="HAMAP" id="MF_01877">
    <property type="entry name" value="16SrRNA_methyltr_I"/>
    <property type="match status" value="1"/>
</dbReference>
<dbReference type="InterPro" id="IPR000878">
    <property type="entry name" value="4pyrrol_Mease"/>
</dbReference>
<dbReference type="InterPro" id="IPR035996">
    <property type="entry name" value="4pyrrol_Methylase_sf"/>
</dbReference>
<dbReference type="InterPro" id="IPR014777">
    <property type="entry name" value="4pyrrole_Mease_sub1"/>
</dbReference>
<dbReference type="InterPro" id="IPR014776">
    <property type="entry name" value="4pyrrole_Mease_sub2"/>
</dbReference>
<dbReference type="InterPro" id="IPR008189">
    <property type="entry name" value="rRNA_ssu_MeTfrase_I"/>
</dbReference>
<dbReference type="InterPro" id="IPR018063">
    <property type="entry name" value="SAM_MeTrfase_RsmI_CS"/>
</dbReference>
<dbReference type="NCBIfam" id="TIGR00096">
    <property type="entry name" value="16S rRNA (cytidine(1402)-2'-O)-methyltransferase"/>
    <property type="match status" value="1"/>
</dbReference>
<dbReference type="PANTHER" id="PTHR46111">
    <property type="entry name" value="RIBOSOMAL RNA SMALL SUBUNIT METHYLTRANSFERASE I"/>
    <property type="match status" value="1"/>
</dbReference>
<dbReference type="PANTHER" id="PTHR46111:SF1">
    <property type="entry name" value="RIBOSOMAL RNA SMALL SUBUNIT METHYLTRANSFERASE I"/>
    <property type="match status" value="1"/>
</dbReference>
<dbReference type="Pfam" id="PF00590">
    <property type="entry name" value="TP_methylase"/>
    <property type="match status" value="1"/>
</dbReference>
<dbReference type="PIRSF" id="PIRSF005917">
    <property type="entry name" value="MTase_YraL"/>
    <property type="match status" value="1"/>
</dbReference>
<dbReference type="SUPFAM" id="SSF53790">
    <property type="entry name" value="Tetrapyrrole methylase"/>
    <property type="match status" value="1"/>
</dbReference>
<dbReference type="PROSITE" id="PS01296">
    <property type="entry name" value="RSMI"/>
    <property type="match status" value="1"/>
</dbReference>
<organism>
    <name type="scientific">Bacillus subtilis (strain 168)</name>
    <dbReference type="NCBI Taxonomy" id="224308"/>
    <lineage>
        <taxon>Bacteria</taxon>
        <taxon>Bacillati</taxon>
        <taxon>Bacillota</taxon>
        <taxon>Bacilli</taxon>
        <taxon>Bacillales</taxon>
        <taxon>Bacillaceae</taxon>
        <taxon>Bacillus</taxon>
    </lineage>
</organism>
<sequence>MLRRQMSFNGKSDMGILYLVPTPIGNLEDMTFRAIDTLKSVDAIAAEDTRQTKKLCHVYEIETPLVSYHEHNKESSGHKIIEWLKSGKNIALVSDAGLPTISDPGAEIVKDFTDIGGYVVPLPGANAALTALIASGIVPQPFFFYGFLNRQKKEKKKELEALKKRQETIIFYEAPHRLKETLSAMAEILGDREIAVTRELTKKYEEFIRGTISEVIGWANEDQIRGEFCLVVEGSNNEEVDEEEQWWETLTAKEHVEHYISKGATSKEAIKKAAVDRNVPKREVYDAYHIKQ</sequence>
<evidence type="ECO:0000255" key="1">
    <source>
        <dbReference type="HAMAP-Rule" id="MF_01877"/>
    </source>
</evidence>
<protein>
    <recommendedName>
        <fullName evidence="1">Ribosomal RNA small subunit methyltransferase I</fullName>
        <ecNumber evidence="1">2.1.1.198</ecNumber>
    </recommendedName>
    <alternativeName>
        <fullName evidence="1">16S rRNA 2'-O-ribose C1402 methyltransferase</fullName>
    </alternativeName>
    <alternativeName>
        <fullName evidence="1">rRNA (cytidine-2'-O-)-methyltransferase RsmI</fullName>
    </alternativeName>
</protein>
<feature type="chain" id="PRO_0000211934" description="Ribosomal RNA small subunit methyltransferase I">
    <location>
        <begin position="1"/>
        <end position="292"/>
    </location>
</feature>
<comment type="function">
    <text evidence="1">Catalyzes the 2'-O-methylation of the ribose of cytidine 1402 (C1402) in 16S rRNA.</text>
</comment>
<comment type="catalytic activity">
    <reaction evidence="1">
        <text>cytidine(1402) in 16S rRNA + S-adenosyl-L-methionine = 2'-O-methylcytidine(1402) in 16S rRNA + S-adenosyl-L-homocysteine + H(+)</text>
        <dbReference type="Rhea" id="RHEA:42924"/>
        <dbReference type="Rhea" id="RHEA-COMP:10285"/>
        <dbReference type="Rhea" id="RHEA-COMP:10286"/>
        <dbReference type="ChEBI" id="CHEBI:15378"/>
        <dbReference type="ChEBI" id="CHEBI:57856"/>
        <dbReference type="ChEBI" id="CHEBI:59789"/>
        <dbReference type="ChEBI" id="CHEBI:74495"/>
        <dbReference type="ChEBI" id="CHEBI:82748"/>
        <dbReference type="EC" id="2.1.1.198"/>
    </reaction>
</comment>
<comment type="subcellular location">
    <subcellularLocation>
        <location evidence="1">Cytoplasm</location>
    </subcellularLocation>
</comment>
<comment type="similarity">
    <text evidence="1">Belongs to the methyltransferase superfamily. RsmI family.</text>
</comment>
<gene>
    <name evidence="1" type="primary">rsmI</name>
    <name type="synonym">yabC</name>
    <name type="ordered locus">BSU00360</name>
</gene>
<accession>P37544</accession>
<name>RSMI_BACSU</name>
<keyword id="KW-0963">Cytoplasm</keyword>
<keyword id="KW-0489">Methyltransferase</keyword>
<keyword id="KW-1185">Reference proteome</keyword>
<keyword id="KW-0698">rRNA processing</keyword>
<keyword id="KW-0949">S-adenosyl-L-methionine</keyword>
<keyword id="KW-0808">Transferase</keyword>
<reference key="1">
    <citation type="journal article" date="1994" name="DNA Res.">
        <title>Systematic sequencing of the 180 kilobase region of the Bacillus subtilis chromosome containing the replication origin.</title>
        <authorList>
            <person name="Ogasawara N."/>
            <person name="Nakai S."/>
            <person name="Yoshikawa H."/>
        </authorList>
    </citation>
    <scope>NUCLEOTIDE SEQUENCE [GENOMIC DNA]</scope>
    <source>
        <strain>168</strain>
    </source>
</reference>
<reference key="2">
    <citation type="journal article" date="1997" name="Nature">
        <title>The complete genome sequence of the Gram-positive bacterium Bacillus subtilis.</title>
        <authorList>
            <person name="Kunst F."/>
            <person name="Ogasawara N."/>
            <person name="Moszer I."/>
            <person name="Albertini A.M."/>
            <person name="Alloni G."/>
            <person name="Azevedo V."/>
            <person name="Bertero M.G."/>
            <person name="Bessieres P."/>
            <person name="Bolotin A."/>
            <person name="Borchert S."/>
            <person name="Borriss R."/>
            <person name="Boursier L."/>
            <person name="Brans A."/>
            <person name="Braun M."/>
            <person name="Brignell S.C."/>
            <person name="Bron S."/>
            <person name="Brouillet S."/>
            <person name="Bruschi C.V."/>
            <person name="Caldwell B."/>
            <person name="Capuano V."/>
            <person name="Carter N.M."/>
            <person name="Choi S.-K."/>
            <person name="Codani J.-J."/>
            <person name="Connerton I.F."/>
            <person name="Cummings N.J."/>
            <person name="Daniel R.A."/>
            <person name="Denizot F."/>
            <person name="Devine K.M."/>
            <person name="Duesterhoeft A."/>
            <person name="Ehrlich S.D."/>
            <person name="Emmerson P.T."/>
            <person name="Entian K.-D."/>
            <person name="Errington J."/>
            <person name="Fabret C."/>
            <person name="Ferrari E."/>
            <person name="Foulger D."/>
            <person name="Fritz C."/>
            <person name="Fujita M."/>
            <person name="Fujita Y."/>
            <person name="Fuma S."/>
            <person name="Galizzi A."/>
            <person name="Galleron N."/>
            <person name="Ghim S.-Y."/>
            <person name="Glaser P."/>
            <person name="Goffeau A."/>
            <person name="Golightly E.J."/>
            <person name="Grandi G."/>
            <person name="Guiseppi G."/>
            <person name="Guy B.J."/>
            <person name="Haga K."/>
            <person name="Haiech J."/>
            <person name="Harwood C.R."/>
            <person name="Henaut A."/>
            <person name="Hilbert H."/>
            <person name="Holsappel S."/>
            <person name="Hosono S."/>
            <person name="Hullo M.-F."/>
            <person name="Itaya M."/>
            <person name="Jones L.-M."/>
            <person name="Joris B."/>
            <person name="Karamata D."/>
            <person name="Kasahara Y."/>
            <person name="Klaerr-Blanchard M."/>
            <person name="Klein C."/>
            <person name="Kobayashi Y."/>
            <person name="Koetter P."/>
            <person name="Koningstein G."/>
            <person name="Krogh S."/>
            <person name="Kumano M."/>
            <person name="Kurita K."/>
            <person name="Lapidus A."/>
            <person name="Lardinois S."/>
            <person name="Lauber J."/>
            <person name="Lazarevic V."/>
            <person name="Lee S.-M."/>
            <person name="Levine A."/>
            <person name="Liu H."/>
            <person name="Masuda S."/>
            <person name="Mauel C."/>
            <person name="Medigue C."/>
            <person name="Medina N."/>
            <person name="Mellado R.P."/>
            <person name="Mizuno M."/>
            <person name="Moestl D."/>
            <person name="Nakai S."/>
            <person name="Noback M."/>
            <person name="Noone D."/>
            <person name="O'Reilly M."/>
            <person name="Ogawa K."/>
            <person name="Ogiwara A."/>
            <person name="Oudega B."/>
            <person name="Park S.-H."/>
            <person name="Parro V."/>
            <person name="Pohl T.M."/>
            <person name="Portetelle D."/>
            <person name="Porwollik S."/>
            <person name="Prescott A.M."/>
            <person name="Presecan E."/>
            <person name="Pujic P."/>
            <person name="Purnelle B."/>
            <person name="Rapoport G."/>
            <person name="Rey M."/>
            <person name="Reynolds S."/>
            <person name="Rieger M."/>
            <person name="Rivolta C."/>
            <person name="Rocha E."/>
            <person name="Roche B."/>
            <person name="Rose M."/>
            <person name="Sadaie Y."/>
            <person name="Sato T."/>
            <person name="Scanlan E."/>
            <person name="Schleich S."/>
            <person name="Schroeter R."/>
            <person name="Scoffone F."/>
            <person name="Sekiguchi J."/>
            <person name="Sekowska A."/>
            <person name="Seror S.J."/>
            <person name="Serror P."/>
            <person name="Shin B.-S."/>
            <person name="Soldo B."/>
            <person name="Sorokin A."/>
            <person name="Tacconi E."/>
            <person name="Takagi T."/>
            <person name="Takahashi H."/>
            <person name="Takemaru K."/>
            <person name="Takeuchi M."/>
            <person name="Tamakoshi A."/>
            <person name="Tanaka T."/>
            <person name="Terpstra P."/>
            <person name="Tognoni A."/>
            <person name="Tosato V."/>
            <person name="Uchiyama S."/>
            <person name="Vandenbol M."/>
            <person name="Vannier F."/>
            <person name="Vassarotti A."/>
            <person name="Viari A."/>
            <person name="Wambutt R."/>
            <person name="Wedler E."/>
            <person name="Wedler H."/>
            <person name="Weitzenegger T."/>
            <person name="Winters P."/>
            <person name="Wipat A."/>
            <person name="Yamamoto H."/>
            <person name="Yamane K."/>
            <person name="Yasumoto K."/>
            <person name="Yata K."/>
            <person name="Yoshida K."/>
            <person name="Yoshikawa H.-F."/>
            <person name="Zumstein E."/>
            <person name="Yoshikawa H."/>
            <person name="Danchin A."/>
        </authorList>
    </citation>
    <scope>NUCLEOTIDE SEQUENCE [LARGE SCALE GENOMIC DNA]</scope>
    <source>
        <strain>168</strain>
    </source>
</reference>